<keyword id="KW-0520">NAD</keyword>
<keyword id="KW-0560">Oxidoreductase</keyword>
<keyword id="KW-1185">Reference proteome</keyword>
<keyword id="KW-0816">Tricarboxylic acid cycle</keyword>
<dbReference type="EC" id="1.1.1.37" evidence="1"/>
<dbReference type="EMBL" id="CP001044">
    <property type="protein sequence ID" value="ACC73473.1"/>
    <property type="molecule type" value="Genomic_DNA"/>
</dbReference>
<dbReference type="RefSeq" id="WP_012403646.1">
    <property type="nucleotide sequence ID" value="NC_010623.1"/>
</dbReference>
<dbReference type="SMR" id="B2JQD2"/>
<dbReference type="STRING" id="391038.Bphy_4358"/>
<dbReference type="KEGG" id="bph:Bphy_4358"/>
<dbReference type="eggNOG" id="COG0039">
    <property type="taxonomic scope" value="Bacteria"/>
</dbReference>
<dbReference type="HOGENOM" id="CLU_040727_2_0_4"/>
<dbReference type="OrthoDB" id="9802969at2"/>
<dbReference type="Proteomes" id="UP000001192">
    <property type="component" value="Chromosome 2"/>
</dbReference>
<dbReference type="GO" id="GO:0030060">
    <property type="term" value="F:L-malate dehydrogenase (NAD+) activity"/>
    <property type="evidence" value="ECO:0007669"/>
    <property type="project" value="UniProtKB-UniRule"/>
</dbReference>
<dbReference type="GO" id="GO:0006108">
    <property type="term" value="P:malate metabolic process"/>
    <property type="evidence" value="ECO:0007669"/>
    <property type="project" value="InterPro"/>
</dbReference>
<dbReference type="GO" id="GO:0006099">
    <property type="term" value="P:tricarboxylic acid cycle"/>
    <property type="evidence" value="ECO:0007669"/>
    <property type="project" value="UniProtKB-UniRule"/>
</dbReference>
<dbReference type="CDD" id="cd01338">
    <property type="entry name" value="MDH_chloroplast-like"/>
    <property type="match status" value="1"/>
</dbReference>
<dbReference type="FunFam" id="3.40.50.720:FF:000010">
    <property type="entry name" value="Malate dehydrogenase"/>
    <property type="match status" value="1"/>
</dbReference>
<dbReference type="FunFam" id="3.90.110.10:FF:000002">
    <property type="entry name" value="Malate dehydrogenase"/>
    <property type="match status" value="1"/>
</dbReference>
<dbReference type="Gene3D" id="3.90.110.10">
    <property type="entry name" value="Lactate dehydrogenase/glycoside hydrolase, family 4, C-terminal"/>
    <property type="match status" value="1"/>
</dbReference>
<dbReference type="Gene3D" id="3.40.50.720">
    <property type="entry name" value="NAD(P)-binding Rossmann-like Domain"/>
    <property type="match status" value="1"/>
</dbReference>
<dbReference type="HAMAP" id="MF_01517">
    <property type="entry name" value="Malate_dehydrog_2"/>
    <property type="match status" value="1"/>
</dbReference>
<dbReference type="InterPro" id="IPR001557">
    <property type="entry name" value="L-lactate/malate_DH"/>
</dbReference>
<dbReference type="InterPro" id="IPR022383">
    <property type="entry name" value="Lactate/malate_DH_C"/>
</dbReference>
<dbReference type="InterPro" id="IPR001236">
    <property type="entry name" value="Lactate/malate_DH_N"/>
</dbReference>
<dbReference type="InterPro" id="IPR015955">
    <property type="entry name" value="Lactate_DH/Glyco_Ohase_4_C"/>
</dbReference>
<dbReference type="InterPro" id="IPR010945">
    <property type="entry name" value="Malate_DH_type2"/>
</dbReference>
<dbReference type="InterPro" id="IPR036291">
    <property type="entry name" value="NAD(P)-bd_dom_sf"/>
</dbReference>
<dbReference type="NCBIfam" id="TIGR01759">
    <property type="entry name" value="MalateDH-SF1"/>
    <property type="match status" value="1"/>
</dbReference>
<dbReference type="NCBIfam" id="NF003916">
    <property type="entry name" value="PRK05442.1"/>
    <property type="match status" value="1"/>
</dbReference>
<dbReference type="PANTHER" id="PTHR23382">
    <property type="entry name" value="MALATE DEHYDROGENASE"/>
    <property type="match status" value="1"/>
</dbReference>
<dbReference type="Pfam" id="PF02866">
    <property type="entry name" value="Ldh_1_C"/>
    <property type="match status" value="1"/>
</dbReference>
<dbReference type="Pfam" id="PF00056">
    <property type="entry name" value="Ldh_1_N"/>
    <property type="match status" value="1"/>
</dbReference>
<dbReference type="PIRSF" id="PIRSF000102">
    <property type="entry name" value="Lac_mal_DH"/>
    <property type="match status" value="1"/>
</dbReference>
<dbReference type="SUPFAM" id="SSF56327">
    <property type="entry name" value="LDH C-terminal domain-like"/>
    <property type="match status" value="1"/>
</dbReference>
<dbReference type="SUPFAM" id="SSF51735">
    <property type="entry name" value="NAD(P)-binding Rossmann-fold domains"/>
    <property type="match status" value="1"/>
</dbReference>
<comment type="function">
    <text evidence="1">Catalyzes the reversible oxidation of malate to oxaloacetate.</text>
</comment>
<comment type="catalytic activity">
    <reaction evidence="1">
        <text>(S)-malate + NAD(+) = oxaloacetate + NADH + H(+)</text>
        <dbReference type="Rhea" id="RHEA:21432"/>
        <dbReference type="ChEBI" id="CHEBI:15378"/>
        <dbReference type="ChEBI" id="CHEBI:15589"/>
        <dbReference type="ChEBI" id="CHEBI:16452"/>
        <dbReference type="ChEBI" id="CHEBI:57540"/>
        <dbReference type="ChEBI" id="CHEBI:57945"/>
        <dbReference type="EC" id="1.1.1.37"/>
    </reaction>
</comment>
<comment type="similarity">
    <text evidence="1">Belongs to the LDH/MDH superfamily. MDH type 2 family.</text>
</comment>
<proteinExistence type="inferred from homology"/>
<protein>
    <recommendedName>
        <fullName evidence="1">Malate dehydrogenase</fullName>
        <ecNumber evidence="1">1.1.1.37</ecNumber>
    </recommendedName>
</protein>
<organism>
    <name type="scientific">Paraburkholderia phymatum (strain DSM 17167 / CIP 108236 / LMG 21445 / STM815)</name>
    <name type="common">Burkholderia phymatum</name>
    <dbReference type="NCBI Taxonomy" id="391038"/>
    <lineage>
        <taxon>Bacteria</taxon>
        <taxon>Pseudomonadati</taxon>
        <taxon>Pseudomonadota</taxon>
        <taxon>Betaproteobacteria</taxon>
        <taxon>Burkholderiales</taxon>
        <taxon>Burkholderiaceae</taxon>
        <taxon>Paraburkholderia</taxon>
    </lineage>
</organism>
<reference key="1">
    <citation type="journal article" date="2014" name="Stand. Genomic Sci.">
        <title>Complete genome sequence of Burkholderia phymatum STM815(T), a broad host range and efficient nitrogen-fixing symbiont of Mimosa species.</title>
        <authorList>
            <person name="Moulin L."/>
            <person name="Klonowska A."/>
            <person name="Caroline B."/>
            <person name="Booth K."/>
            <person name="Vriezen J.A."/>
            <person name="Melkonian R."/>
            <person name="James E.K."/>
            <person name="Young J.P."/>
            <person name="Bena G."/>
            <person name="Hauser L."/>
            <person name="Land M."/>
            <person name="Kyrpides N."/>
            <person name="Bruce D."/>
            <person name="Chain P."/>
            <person name="Copeland A."/>
            <person name="Pitluck S."/>
            <person name="Woyke T."/>
            <person name="Lizotte-Waniewski M."/>
            <person name="Bristow J."/>
            <person name="Riley M."/>
        </authorList>
    </citation>
    <scope>NUCLEOTIDE SEQUENCE [LARGE SCALE GENOMIC DNA]</scope>
    <source>
        <strain>DSM 17167 / CIP 108236 / LMG 21445 / STM815</strain>
    </source>
</reference>
<name>MDH_PARP8</name>
<accession>B2JQD2</accession>
<feature type="chain" id="PRO_1000191613" description="Malate dehydrogenase">
    <location>
        <begin position="1"/>
        <end position="327"/>
    </location>
</feature>
<feature type="active site" description="Proton acceptor" evidence="1">
    <location>
        <position position="188"/>
    </location>
</feature>
<feature type="binding site" evidence="1">
    <location>
        <begin position="12"/>
        <end position="18"/>
    </location>
    <ligand>
        <name>NAD(+)</name>
        <dbReference type="ChEBI" id="CHEBI:57540"/>
    </ligand>
</feature>
<feature type="binding site" evidence="1">
    <location>
        <position position="93"/>
    </location>
    <ligand>
        <name>substrate</name>
    </ligand>
</feature>
<feature type="binding site" evidence="1">
    <location>
        <position position="99"/>
    </location>
    <ligand>
        <name>substrate</name>
    </ligand>
</feature>
<feature type="binding site" evidence="1">
    <location>
        <position position="106"/>
    </location>
    <ligand>
        <name>NAD(+)</name>
        <dbReference type="ChEBI" id="CHEBI:57540"/>
    </ligand>
</feature>
<feature type="binding site" evidence="1">
    <location>
        <position position="113"/>
    </location>
    <ligand>
        <name>NAD(+)</name>
        <dbReference type="ChEBI" id="CHEBI:57540"/>
    </ligand>
</feature>
<feature type="binding site" evidence="1">
    <location>
        <begin position="130"/>
        <end position="132"/>
    </location>
    <ligand>
        <name>NAD(+)</name>
        <dbReference type="ChEBI" id="CHEBI:57540"/>
    </ligand>
</feature>
<feature type="binding site" evidence="1">
    <location>
        <position position="132"/>
    </location>
    <ligand>
        <name>substrate</name>
    </ligand>
</feature>
<feature type="binding site" evidence="1">
    <location>
        <position position="163"/>
    </location>
    <ligand>
        <name>substrate</name>
    </ligand>
</feature>
<sequence length="327" mass="35163">MAKPAKRVAVTGAAGQIGYSLLFRIANGDMLGKDQPVILQLLDLPQAQAAVKGVVMELEDCAFPLLAGVVVTDDPKVAFKDADVALLVGARPRSKGMERKDLLSANAEIFTVQGKALNEVASRDVKVLVVGNPANTNAYIAMKSAPDLPKKNFTAMLRLDHNRALSQLAAKSGKPVSSIEKLVVWGNHSPTMYPDFRVATAEGQDLTKLINDEEWNRNTFIPTVGKRGAAIIEARGLSSAASAANAAIDHVRDWVLGTNGKWVTMGIPSDGSYGIPEDIVYGVAVTCENGEYKRVEGLQIDAFSREKMDNTLNELLEERDGVQHLLG</sequence>
<gene>
    <name evidence="1" type="primary">mdh</name>
    <name type="ordered locus">Bphy_4358</name>
</gene>
<evidence type="ECO:0000255" key="1">
    <source>
        <dbReference type="HAMAP-Rule" id="MF_01517"/>
    </source>
</evidence>